<protein>
    <recommendedName>
        <fullName>Elongation factor P</fullName>
        <shortName>EF-P</shortName>
    </recommendedName>
</protein>
<feature type="chain" id="PRO_0000094343" description="Elongation factor P">
    <location>
        <begin position="1"/>
        <end position="185"/>
    </location>
</feature>
<accession>P68773</accession>
<accession>P82459</accession>
<accession>Q48WW0</accession>
<sequence length="185" mass="20467">MIEASKLKAGMTFEAEGKLIRVLEASHHKPGKGNTIMRMKLRDVRTGSTFDTTYRPDEKFEQAIIETVPAQYLYKMDDTAYFMNTDTYDQYEIPVANVEQELLYILENSDVKIQFYGSEVIGVTVPTTVELTVAETQPSIKGATVTGSGKPATLETGLVVNVPDFIEAGQKLIINTAEGTYVSRA</sequence>
<organism>
    <name type="scientific">Streptococcus pyogenes serotype M1</name>
    <dbReference type="NCBI Taxonomy" id="301447"/>
    <lineage>
        <taxon>Bacteria</taxon>
        <taxon>Bacillati</taxon>
        <taxon>Bacillota</taxon>
        <taxon>Bacilli</taxon>
        <taxon>Lactobacillales</taxon>
        <taxon>Streptococcaceae</taxon>
        <taxon>Streptococcus</taxon>
    </lineage>
</organism>
<reference key="1">
    <citation type="journal article" date="2001" name="Proc. Natl. Acad. Sci. U.S.A.">
        <title>Complete genome sequence of an M1 strain of Streptococcus pyogenes.</title>
        <authorList>
            <person name="Ferretti J.J."/>
            <person name="McShan W.M."/>
            <person name="Ajdic D.J."/>
            <person name="Savic D.J."/>
            <person name="Savic G."/>
            <person name="Lyon K."/>
            <person name="Primeaux C."/>
            <person name="Sezate S."/>
            <person name="Suvorov A.N."/>
            <person name="Kenton S."/>
            <person name="Lai H.S."/>
            <person name="Lin S.P."/>
            <person name="Qian Y."/>
            <person name="Jia H.G."/>
            <person name="Najar F.Z."/>
            <person name="Ren Q."/>
            <person name="Zhu H."/>
            <person name="Song L."/>
            <person name="White J."/>
            <person name="Yuan X."/>
            <person name="Clifton S.W."/>
            <person name="Roe B.A."/>
            <person name="McLaughlin R.E."/>
        </authorList>
    </citation>
    <scope>NUCLEOTIDE SEQUENCE [LARGE SCALE GENOMIC DNA]</scope>
    <source>
        <strain>ATCC 700294 / SF370 / Serotype M1</strain>
    </source>
</reference>
<reference key="2">
    <citation type="journal article" date="2005" name="J. Infect. Dis.">
        <title>Evolutionary origin and emergence of a highly successful clone of serotype M1 group A Streptococcus involved multiple horizontal gene transfer events.</title>
        <authorList>
            <person name="Sumby P."/>
            <person name="Porcella S.F."/>
            <person name="Madrigal A.G."/>
            <person name="Barbian K.D."/>
            <person name="Virtaneva K."/>
            <person name="Ricklefs S.M."/>
            <person name="Sturdevant D.E."/>
            <person name="Graham M.R."/>
            <person name="Vuopio-Varkila J."/>
            <person name="Hoe N.P."/>
            <person name="Musser J.M."/>
        </authorList>
    </citation>
    <scope>NUCLEOTIDE SEQUENCE [LARGE SCALE GENOMIC DNA]</scope>
    <source>
        <strain>ATCC BAA-947 / MGAS5005 / Serotype M1</strain>
    </source>
</reference>
<dbReference type="EMBL" id="AE004092">
    <property type="protein sequence ID" value="AAK34545.1"/>
    <property type="molecule type" value="Genomic_DNA"/>
</dbReference>
<dbReference type="EMBL" id="CP000017">
    <property type="protein sequence ID" value="AAZ52165.1"/>
    <property type="molecule type" value="Genomic_DNA"/>
</dbReference>
<dbReference type="RefSeq" id="NP_269824.1">
    <property type="nucleotide sequence ID" value="NC_002737.2"/>
</dbReference>
<dbReference type="SMR" id="P68773"/>
<dbReference type="PaxDb" id="1314-HKU360_01597"/>
<dbReference type="KEGG" id="spy:SPy_1821"/>
<dbReference type="KEGG" id="spz:M5005_Spy1547"/>
<dbReference type="PATRIC" id="fig|160490.10.peg.1582"/>
<dbReference type="HOGENOM" id="CLU_074944_3_0_9"/>
<dbReference type="OMA" id="SNHHKPG"/>
<dbReference type="UniPathway" id="UPA00345"/>
<dbReference type="Proteomes" id="UP000000750">
    <property type="component" value="Chromosome"/>
</dbReference>
<dbReference type="GO" id="GO:0005737">
    <property type="term" value="C:cytoplasm"/>
    <property type="evidence" value="ECO:0007669"/>
    <property type="project" value="UniProtKB-SubCell"/>
</dbReference>
<dbReference type="GO" id="GO:0003746">
    <property type="term" value="F:translation elongation factor activity"/>
    <property type="evidence" value="ECO:0007669"/>
    <property type="project" value="UniProtKB-UniRule"/>
</dbReference>
<dbReference type="GO" id="GO:0043043">
    <property type="term" value="P:peptide biosynthetic process"/>
    <property type="evidence" value="ECO:0007669"/>
    <property type="project" value="InterPro"/>
</dbReference>
<dbReference type="CDD" id="cd04470">
    <property type="entry name" value="S1_EF-P_repeat_1"/>
    <property type="match status" value="1"/>
</dbReference>
<dbReference type="CDD" id="cd05794">
    <property type="entry name" value="S1_EF-P_repeat_2"/>
    <property type="match status" value="1"/>
</dbReference>
<dbReference type="FunFam" id="2.30.30.30:FF:000003">
    <property type="entry name" value="Elongation factor P"/>
    <property type="match status" value="1"/>
</dbReference>
<dbReference type="FunFam" id="2.40.50.140:FF:000004">
    <property type="entry name" value="Elongation factor P"/>
    <property type="match status" value="1"/>
</dbReference>
<dbReference type="FunFam" id="2.40.50.140:FF:000009">
    <property type="entry name" value="Elongation factor P"/>
    <property type="match status" value="1"/>
</dbReference>
<dbReference type="Gene3D" id="2.30.30.30">
    <property type="match status" value="1"/>
</dbReference>
<dbReference type="Gene3D" id="2.40.50.140">
    <property type="entry name" value="Nucleic acid-binding proteins"/>
    <property type="match status" value="2"/>
</dbReference>
<dbReference type="HAMAP" id="MF_00141">
    <property type="entry name" value="EF_P"/>
    <property type="match status" value="1"/>
</dbReference>
<dbReference type="InterPro" id="IPR015365">
    <property type="entry name" value="Elong-fact-P_C"/>
</dbReference>
<dbReference type="InterPro" id="IPR012340">
    <property type="entry name" value="NA-bd_OB-fold"/>
</dbReference>
<dbReference type="InterPro" id="IPR014722">
    <property type="entry name" value="Rib_uL2_dom2"/>
</dbReference>
<dbReference type="InterPro" id="IPR020599">
    <property type="entry name" value="Transl_elong_fac_P/YeiP"/>
</dbReference>
<dbReference type="InterPro" id="IPR013185">
    <property type="entry name" value="Transl_elong_KOW-like"/>
</dbReference>
<dbReference type="InterPro" id="IPR001059">
    <property type="entry name" value="Transl_elong_P/YeiP_cen"/>
</dbReference>
<dbReference type="InterPro" id="IPR013852">
    <property type="entry name" value="Transl_elong_P/YeiP_CS"/>
</dbReference>
<dbReference type="InterPro" id="IPR011768">
    <property type="entry name" value="Transl_elongation_fac_P"/>
</dbReference>
<dbReference type="InterPro" id="IPR008991">
    <property type="entry name" value="Translation_prot_SH3-like_sf"/>
</dbReference>
<dbReference type="NCBIfam" id="TIGR00038">
    <property type="entry name" value="efp"/>
    <property type="match status" value="1"/>
</dbReference>
<dbReference type="NCBIfam" id="NF001810">
    <property type="entry name" value="PRK00529.1"/>
    <property type="match status" value="1"/>
</dbReference>
<dbReference type="PANTHER" id="PTHR30053">
    <property type="entry name" value="ELONGATION FACTOR P"/>
    <property type="match status" value="1"/>
</dbReference>
<dbReference type="PANTHER" id="PTHR30053:SF12">
    <property type="entry name" value="ELONGATION FACTOR P (EF-P) FAMILY PROTEIN"/>
    <property type="match status" value="1"/>
</dbReference>
<dbReference type="Pfam" id="PF01132">
    <property type="entry name" value="EFP"/>
    <property type="match status" value="1"/>
</dbReference>
<dbReference type="Pfam" id="PF08207">
    <property type="entry name" value="EFP_N"/>
    <property type="match status" value="1"/>
</dbReference>
<dbReference type="Pfam" id="PF09285">
    <property type="entry name" value="Elong-fact-P_C"/>
    <property type="match status" value="1"/>
</dbReference>
<dbReference type="PIRSF" id="PIRSF005901">
    <property type="entry name" value="EF-P"/>
    <property type="match status" value="1"/>
</dbReference>
<dbReference type="SMART" id="SM01185">
    <property type="entry name" value="EFP"/>
    <property type="match status" value="1"/>
</dbReference>
<dbReference type="SMART" id="SM00841">
    <property type="entry name" value="Elong-fact-P_C"/>
    <property type="match status" value="1"/>
</dbReference>
<dbReference type="SUPFAM" id="SSF50249">
    <property type="entry name" value="Nucleic acid-binding proteins"/>
    <property type="match status" value="2"/>
</dbReference>
<dbReference type="SUPFAM" id="SSF50104">
    <property type="entry name" value="Translation proteins SH3-like domain"/>
    <property type="match status" value="1"/>
</dbReference>
<dbReference type="PROSITE" id="PS01275">
    <property type="entry name" value="EFP"/>
    <property type="match status" value="1"/>
</dbReference>
<keyword id="KW-0963">Cytoplasm</keyword>
<keyword id="KW-0251">Elongation factor</keyword>
<keyword id="KW-0648">Protein biosynthesis</keyword>
<keyword id="KW-1185">Reference proteome</keyword>
<proteinExistence type="inferred from homology"/>
<gene>
    <name type="primary">efp</name>
    <name type="ordered locus">SPy_1821</name>
    <name type="ordered locus">M5005_Spy1547</name>
</gene>
<name>EFP_STRP1</name>
<evidence type="ECO:0000250" key="1"/>
<evidence type="ECO:0000305" key="2"/>
<comment type="function">
    <text evidence="1">Involved in peptide bond synthesis. Stimulates efficient translation and peptide-bond synthesis on native or reconstituted 70S ribosomes in vitro. Probably functions indirectly by altering the affinity of the ribosome for aminoacyl-tRNA, thus increasing their reactivity as acceptors for peptidyl transferase (By similarity).</text>
</comment>
<comment type="pathway">
    <text>Protein biosynthesis; polypeptide chain elongation.</text>
</comment>
<comment type="subcellular location">
    <subcellularLocation>
        <location evidence="1">Cytoplasm</location>
    </subcellularLocation>
</comment>
<comment type="similarity">
    <text evidence="2">Belongs to the elongation factor P family.</text>
</comment>